<comment type="function">
    <text evidence="5">Involved in the biosynthesis of phosphatidyl-myo-inositol mannosides (PIM) which are early precursors in the biosynthesis of lipomannans (LM) and lipoarabinomannans (LAM). Catalyzes the addition of a mannosyl residue from GDP-D-mannose (GDP-Man) to the position 2 of the carrier lipid phosphatidyl-myo-inositol (PI) to generate a phosphatidyl-myo-inositol bearing an alpha-1,2-linked mannose residue (PIM1).</text>
</comment>
<comment type="catalytic activity">
    <reaction evidence="5">
        <text>a 1,2-diacyl-sn-glycero-3-phospho-(1D-myo-inositol) + GDP-alpha-D-mannose = a 1,2-diacyl-sn-glycero-3-phospho-[alpha-D-mannopyranosyl-(1&lt;-&gt;6)-D-myo-inositol] + GDP + H(+)</text>
        <dbReference type="Rhea" id="RHEA:47368"/>
        <dbReference type="ChEBI" id="CHEBI:15378"/>
        <dbReference type="ChEBI" id="CHEBI:57527"/>
        <dbReference type="ChEBI" id="CHEBI:57880"/>
        <dbReference type="ChEBI" id="CHEBI:58189"/>
        <dbReference type="ChEBI" id="CHEBI:87673"/>
        <dbReference type="EC" id="2.4.1.345"/>
    </reaction>
</comment>
<comment type="cofactor">
    <cofactor evidence="2">
        <name>Mg(2+)</name>
        <dbReference type="ChEBI" id="CHEBI:18420"/>
    </cofactor>
</comment>
<comment type="pathway">
    <text evidence="4">Phospholipid metabolism; phosphatidylinositol metabolism.</text>
</comment>
<comment type="subunit">
    <text evidence="1">Monomer.</text>
</comment>
<comment type="subcellular location">
    <subcellularLocation>
        <location evidence="1">Cell membrane</location>
        <topology evidence="1">Peripheral membrane protein</topology>
        <orientation evidence="1">Cytoplasmic side</orientation>
    </subcellularLocation>
</comment>
<comment type="similarity">
    <text evidence="4">Belongs to the glycosyltransferase group 1 family. Glycosyltransferase 4 subfamily.</text>
</comment>
<proteinExistence type="evidence at protein level"/>
<accession>D7GDZ9</accession>
<organism>
    <name type="scientific">Propionibacterium freudenreichii subsp. shermanii (strain ATCC 9614 / DSM 4902 / CIP 103027 / NCIMB 8099 / CIRM-BIA1)</name>
    <dbReference type="NCBI Taxonomy" id="754252"/>
    <lineage>
        <taxon>Bacteria</taxon>
        <taxon>Bacillati</taxon>
        <taxon>Actinomycetota</taxon>
        <taxon>Actinomycetes</taxon>
        <taxon>Propionibacteriales</taxon>
        <taxon>Propionibacteriaceae</taxon>
        <taxon>Propionibacterium</taxon>
    </lineage>
</organism>
<keyword id="KW-1003">Cell membrane</keyword>
<keyword id="KW-0328">Glycosyltransferase</keyword>
<keyword id="KW-0444">Lipid biosynthesis</keyword>
<keyword id="KW-0443">Lipid metabolism</keyword>
<keyword id="KW-0460">Magnesium</keyword>
<keyword id="KW-0472">Membrane</keyword>
<keyword id="KW-0594">Phospholipid biosynthesis</keyword>
<keyword id="KW-1208">Phospholipid metabolism</keyword>
<keyword id="KW-1185">Reference proteome</keyword>
<keyword id="KW-0808">Transferase</keyword>
<name>PIMA_PROFC</name>
<sequence>MRVGLVCPYSFARPGGVQNHVLGLGGWLKEQGHDVSIIAPGQASRSLLAETGLVPSEFVSAGRAVPVTFNGSVARINFGVGPALKVKKWLDQGNFDVVHLHEPIAPTICLLALYLTDRPVTATFHTATPELTAIRFANRVLPRMVSRIDAAIAVSSEAADVAHHYSGVNPVVIGNGIHLADYPLVRATSRWRGGEHPLITFLGRYDEPRKGFEVLTAALPLVRATYPDLEVVVIGSGTARSVEGVRFLGGLDDEERNAWLGRSDIYIAPQTGRESFGIVLLEAMACGAPVVAANLRAFLDVLTDDEGLVGHTFRVGNSASASRAMLRSLSEPRDLRLERGRALAANYDWSVIGPQVVAMYTVAGQNYATSRGIKNRELKGH</sequence>
<reference key="1">
    <citation type="journal article" date="2010" name="PLoS ONE">
        <title>The complete genome of Propionibacterium freudenreichii CIRM-BIA1, a hardy actinobacterium with food and probiotic applications.</title>
        <authorList>
            <person name="Falentin H."/>
            <person name="Deutsch S.M."/>
            <person name="Jan G."/>
            <person name="Loux V."/>
            <person name="Thierry A."/>
            <person name="Parayre S."/>
            <person name="Maillard M.B."/>
            <person name="Dherbecourt J."/>
            <person name="Cousin F.J."/>
            <person name="Jardin J."/>
            <person name="Siguier P."/>
            <person name="Couloux A."/>
            <person name="Barbe V."/>
            <person name="Vacherie B."/>
            <person name="Wincker P."/>
            <person name="Gibrat J.F."/>
            <person name="Gaillardin C."/>
            <person name="Lortal S."/>
        </authorList>
    </citation>
    <scope>NUCLEOTIDE SEQUENCE [LARGE SCALE GENOMIC DNA]</scope>
    <source>
        <strain>ATCC 9614 / DSM 4902 / CIP 103027 / NCIMB 8099 / CIRM-BIA1</strain>
    </source>
</reference>
<reference key="2">
    <citation type="journal article" date="1968" name="Biochem. Biophys. Res. Commun.">
        <title>Phosphatidylmyoinositol monomannoside in Propionibacterium shermanii.</title>
        <authorList>
            <person name="Brennan P."/>
            <person name="Ballou C.E."/>
        </authorList>
    </citation>
    <scope>FUNCTION</scope>
    <scope>CATALYTIC ACTIVITY</scope>
</reference>
<feature type="chain" id="PRO_0000438239" description="Phosphatidyl-myo-inositol mannosyltransferase">
    <location>
        <begin position="1"/>
        <end position="381"/>
    </location>
</feature>
<feature type="binding site" evidence="1">
    <location>
        <position position="9"/>
    </location>
    <ligand>
        <name>GDP-alpha-D-mannose</name>
        <dbReference type="ChEBI" id="CHEBI:57527"/>
    </ligand>
</feature>
<feature type="binding site" evidence="1">
    <location>
        <position position="16"/>
    </location>
    <ligand>
        <name>GDP-alpha-D-mannose</name>
        <dbReference type="ChEBI" id="CHEBI:57527"/>
    </ligand>
</feature>
<feature type="binding site" evidence="1">
    <location>
        <position position="18"/>
    </location>
    <ligand>
        <name>a 1,2-diacyl-sn-glycero-3-phospho-(1D-myo-inositol)</name>
        <dbReference type="ChEBI" id="CHEBI:57880"/>
    </ligand>
</feature>
<feature type="binding site" evidence="1">
    <location>
        <begin position="69"/>
        <end position="70"/>
    </location>
    <ligand>
        <name>a 1,2-diacyl-sn-glycero-3-phospho-(1D-myo-inositol)</name>
        <dbReference type="ChEBI" id="CHEBI:57880"/>
    </ligand>
</feature>
<feature type="binding site" evidence="1">
    <location>
        <position position="75"/>
    </location>
    <ligand>
        <name>a 1,2-diacyl-sn-glycero-3-phospho-(1D-myo-inositol)</name>
        <dbReference type="ChEBI" id="CHEBI:57880"/>
    </ligand>
</feature>
<feature type="binding site" evidence="1">
    <location>
        <position position="204"/>
    </location>
    <ligand>
        <name>GDP-alpha-D-mannose</name>
        <dbReference type="ChEBI" id="CHEBI:57527"/>
    </ligand>
</feature>
<feature type="binding site" evidence="1">
    <location>
        <begin position="209"/>
        <end position="210"/>
    </location>
    <ligand>
        <name>GDP-alpha-D-mannose</name>
        <dbReference type="ChEBI" id="CHEBI:57527"/>
    </ligand>
</feature>
<feature type="binding site" evidence="1">
    <location>
        <begin position="251"/>
        <end position="253"/>
    </location>
    <ligand>
        <name>GDP-alpha-D-mannose</name>
        <dbReference type="ChEBI" id="CHEBI:57527"/>
    </ligand>
</feature>
<feature type="binding site" evidence="1">
    <location>
        <position position="256"/>
    </location>
    <ligand>
        <name>GDP-alpha-D-mannose</name>
        <dbReference type="ChEBI" id="CHEBI:57527"/>
    </ligand>
</feature>
<feature type="binding site" evidence="1">
    <location>
        <begin position="274"/>
        <end position="278"/>
    </location>
    <ligand>
        <name>GDP-alpha-D-mannose</name>
        <dbReference type="ChEBI" id="CHEBI:57527"/>
    </ligand>
</feature>
<feature type="binding site" evidence="1">
    <location>
        <position position="282"/>
    </location>
    <ligand>
        <name>GDP-alpha-D-mannose</name>
        <dbReference type="ChEBI" id="CHEBI:57527"/>
    </ligand>
</feature>
<feature type="site" description="Important for catalytic activity" evidence="1">
    <location>
        <position position="125"/>
    </location>
</feature>
<evidence type="ECO:0000250" key="1">
    <source>
        <dbReference type="UniProtKB" id="A0QWG6"/>
    </source>
</evidence>
<evidence type="ECO:0000250" key="2">
    <source>
        <dbReference type="UniProtKB" id="P9WMZ5"/>
    </source>
</evidence>
<evidence type="ECO:0000303" key="3">
    <source>
    </source>
</evidence>
<evidence type="ECO:0000305" key="4"/>
<evidence type="ECO:0000305" key="5">
    <source>
    </source>
</evidence>
<evidence type="ECO:0000312" key="6">
    <source>
        <dbReference type="EMBL" id="CBL56760.1"/>
    </source>
</evidence>
<protein>
    <recommendedName>
        <fullName evidence="3">Phosphatidyl-myo-inositol mannosyltransferase</fullName>
        <ecNumber evidence="5">2.4.1.345</ecNumber>
    </recommendedName>
    <alternativeName>
        <fullName evidence="1">Alpha-mannosyltransferase</fullName>
    </alternativeName>
    <alternativeName>
        <fullName evidence="1">GDP-mannose-dependent alpha-(1-2)-phosphatidylinositol mannosyltransferase</fullName>
    </alternativeName>
    <alternativeName>
        <fullName evidence="4">Guanosine diphosphomannose-phosphatidyl-inositol alpha-mannosyltransferase</fullName>
    </alternativeName>
    <alternativeName>
        <fullName evidence="1">Phosphatidylinositol alpha-mannosyltransferase</fullName>
        <shortName evidence="1">PI alpha-mannosyltransferase</shortName>
    </alternativeName>
    <alternativeName>
        <fullName evidence="3">Phosphatidylmyoinositol monomannoside</fullName>
    </alternativeName>
</protein>
<dbReference type="EC" id="2.4.1.345" evidence="5"/>
<dbReference type="EMBL" id="FN806773">
    <property type="protein sequence ID" value="CBL56760.1"/>
    <property type="molecule type" value="Genomic_DNA"/>
</dbReference>
<dbReference type="RefSeq" id="WP_013161134.1">
    <property type="nucleotide sequence ID" value="NC_014215.1"/>
</dbReference>
<dbReference type="SMR" id="D7GDZ9"/>
<dbReference type="STRING" id="754252.PFREUD_12400"/>
<dbReference type="CAZy" id="GT4">
    <property type="family name" value="Glycosyltransferase Family 4"/>
</dbReference>
<dbReference type="KEGG" id="pfr:PFREUD_12400"/>
<dbReference type="eggNOG" id="COG0438">
    <property type="taxonomic scope" value="Bacteria"/>
</dbReference>
<dbReference type="HOGENOM" id="CLU_009583_2_1_11"/>
<dbReference type="UniPathway" id="UPA00949"/>
<dbReference type="Proteomes" id="UP000000936">
    <property type="component" value="Chromosome"/>
</dbReference>
<dbReference type="GO" id="GO:0005886">
    <property type="term" value="C:plasma membrane"/>
    <property type="evidence" value="ECO:0007669"/>
    <property type="project" value="UniProtKB-SubCell"/>
</dbReference>
<dbReference type="GO" id="GO:0043750">
    <property type="term" value="F:phosphatidylinositol alpha-mannosyltransferase activity"/>
    <property type="evidence" value="ECO:0000303"/>
    <property type="project" value="UniProtKB"/>
</dbReference>
<dbReference type="GO" id="GO:1901137">
    <property type="term" value="P:carbohydrate derivative biosynthetic process"/>
    <property type="evidence" value="ECO:0007669"/>
    <property type="project" value="UniProtKB-ARBA"/>
</dbReference>
<dbReference type="GO" id="GO:0046488">
    <property type="term" value="P:phosphatidylinositol metabolic process"/>
    <property type="evidence" value="ECO:0007669"/>
    <property type="project" value="UniProtKB-UniPathway"/>
</dbReference>
<dbReference type="GO" id="GO:0008654">
    <property type="term" value="P:phospholipid biosynthetic process"/>
    <property type="evidence" value="ECO:0007669"/>
    <property type="project" value="UniProtKB-KW"/>
</dbReference>
<dbReference type="CDD" id="cd03801">
    <property type="entry name" value="GT4_PimA-like"/>
    <property type="match status" value="1"/>
</dbReference>
<dbReference type="Gene3D" id="3.40.50.2000">
    <property type="entry name" value="Glycogen Phosphorylase B"/>
    <property type="match status" value="2"/>
</dbReference>
<dbReference type="InterPro" id="IPR028098">
    <property type="entry name" value="Glyco_trans_4-like_N"/>
</dbReference>
<dbReference type="InterPro" id="IPR050194">
    <property type="entry name" value="Glycosyltransferase_grp1"/>
</dbReference>
<dbReference type="PANTHER" id="PTHR45947">
    <property type="entry name" value="SULFOQUINOVOSYL TRANSFERASE SQD2"/>
    <property type="match status" value="1"/>
</dbReference>
<dbReference type="PANTHER" id="PTHR45947:SF3">
    <property type="entry name" value="SULFOQUINOVOSYL TRANSFERASE SQD2"/>
    <property type="match status" value="1"/>
</dbReference>
<dbReference type="Pfam" id="PF13692">
    <property type="entry name" value="Glyco_trans_1_4"/>
    <property type="match status" value="1"/>
</dbReference>
<dbReference type="Pfam" id="PF13439">
    <property type="entry name" value="Glyco_transf_4"/>
    <property type="match status" value="1"/>
</dbReference>
<dbReference type="SUPFAM" id="SSF53756">
    <property type="entry name" value="UDP-Glycosyltransferase/glycogen phosphorylase"/>
    <property type="match status" value="1"/>
</dbReference>
<gene>
    <name evidence="1" type="primary">pimA</name>
    <name evidence="6" type="ordered locus">PFREUD_12400</name>
</gene>